<accession>C4QZV7</accession>
<keyword id="KW-0053">Apoptosis</keyword>
<keyword id="KW-0121">Carboxypeptidase</keyword>
<keyword id="KW-0325">Glycoprotein</keyword>
<keyword id="KW-0333">Golgi apparatus</keyword>
<keyword id="KW-0378">Hydrolase</keyword>
<keyword id="KW-0472">Membrane</keyword>
<keyword id="KW-0645">Protease</keyword>
<keyword id="KW-1185">Reference proteome</keyword>
<keyword id="KW-0732">Signal</keyword>
<keyword id="KW-0812">Transmembrane</keyword>
<keyword id="KW-1133">Transmembrane helix</keyword>
<evidence type="ECO:0000250" key="1"/>
<evidence type="ECO:0000255" key="2"/>
<evidence type="ECO:0000255" key="3">
    <source>
        <dbReference type="PROSITE-ProRule" id="PRU10074"/>
    </source>
</evidence>
<evidence type="ECO:0000256" key="4">
    <source>
        <dbReference type="SAM" id="MobiDB-lite"/>
    </source>
</evidence>
<evidence type="ECO:0000305" key="5"/>
<feature type="signal peptide" evidence="2">
    <location>
        <begin position="1"/>
        <end position="16"/>
    </location>
</feature>
<feature type="chain" id="PRO_0000411940" description="Pheromone-processing carboxypeptidase KEX1">
    <location>
        <begin position="17"/>
        <end position="623"/>
    </location>
</feature>
<feature type="topological domain" description="Lumenal" evidence="2">
    <location>
        <begin position="17"/>
        <end position="512"/>
    </location>
</feature>
<feature type="transmembrane region" description="Helical" evidence="2">
    <location>
        <begin position="513"/>
        <end position="533"/>
    </location>
</feature>
<feature type="topological domain" description="Cytoplasmic" evidence="2">
    <location>
        <begin position="534"/>
        <end position="623"/>
    </location>
</feature>
<feature type="region of interest" description="Disordered" evidence="4">
    <location>
        <begin position="597"/>
        <end position="623"/>
    </location>
</feature>
<feature type="active site" evidence="3">
    <location>
        <position position="177"/>
    </location>
</feature>
<feature type="active site" evidence="3">
    <location>
        <position position="383"/>
    </location>
</feature>
<feature type="active site" evidence="3">
    <location>
        <position position="441"/>
    </location>
</feature>
<feature type="glycosylation site" description="N-linked (GlcNAc...) asparagine" evidence="2">
    <location>
        <position position="54"/>
    </location>
</feature>
<feature type="glycosylation site" description="N-linked (GlcNAc...) asparagine" evidence="2">
    <location>
        <position position="258"/>
    </location>
</feature>
<feature type="glycosylation site" description="N-linked (GlcNAc...) asparagine" evidence="2">
    <location>
        <position position="430"/>
    </location>
</feature>
<feature type="glycosylation site" description="N-linked (GlcNAc...) asparagine" evidence="2">
    <location>
        <position position="438"/>
    </location>
</feature>
<feature type="glycosylation site" description="N-linked (GlcNAc...) asparagine" evidence="2">
    <location>
        <position position="469"/>
    </location>
</feature>
<feature type="glycosylation site" description="N-linked (GlcNAc...) asparagine" evidence="2">
    <location>
        <position position="483"/>
    </location>
</feature>
<proteinExistence type="inferred from homology"/>
<protein>
    <recommendedName>
        <fullName>Pheromone-processing carboxypeptidase KEX1</fullName>
        <ecNumber>3.4.16.6</ecNumber>
    </recommendedName>
    <alternativeName>
        <fullName>Carboxypeptidase D</fullName>
    </alternativeName>
</protein>
<sequence length="623" mass="70018">MLKLLCLLLPLVAVSASPIDLGSQKDYLVLDLPGLSHLSETQRPTMHAGLLPLNLSFVADDDTEYFFWRFSKQDVDRADIVFWLNGGPGCSSMDGALMELGPFVINPKQEVEYNEGTWVEAADVVFVDQPGGTGFSSTTNYLTELTEVADGFVTFLARYFHLFPADVYKKFTLGGESYAGQYVPYILKAIMDDLKSDSGQLPKELYLKGALIGNGWIDPNEQSLSYLEFFIKKELIDIHGSYMPGLLQQQEKCQNLINHSSGEASESQISYSACEKILNDALRFTRDKKAPLDQQCINMYDYTLRDTYPSCGMSWPPYLPDVTAFLQKKSVLEALHLDSSASWSECSARVGSHLKNKISVPSVDILPDLLQEIPIILFNGDHDIICNCIGTERMIDKLEFNGDQGFTEGTEYIPWFYNEVNVGKVISERNLTYVRVYNSSHMVPFDNTPVSRGLLDIYFDNFEDVEYNNVSGIATPVYDVDKNITYIDSNDPRLQNGPKSSSTDDSAAHGNPFFYYVFELFVIVLLLCGLVYLYQYYSNSAPHSILADKHKKKSKNKSKNVRFLDDLESNLDLDNTDDKKDNSVMSKLLSSMGYQAQEPYKPLDKGANADLDIEMDSHGTSEK</sequence>
<reference key="1">
    <citation type="journal article" date="2009" name="Nat. Biotechnol.">
        <title>Genome sequence of the recombinant protein production host Pichia pastoris.</title>
        <authorList>
            <person name="De Schutter K."/>
            <person name="Lin Y.-C."/>
            <person name="Tiels P."/>
            <person name="Van Hecke A."/>
            <person name="Glinka S."/>
            <person name="Weber-Lehmann J."/>
            <person name="Rouze P."/>
            <person name="Van de Peer Y."/>
            <person name="Callewaert N."/>
        </authorList>
    </citation>
    <scope>NUCLEOTIDE SEQUENCE [LARGE SCALE GENOMIC DNA]</scope>
    <source>
        <strain>GS115 / ATCC 20864</strain>
    </source>
</reference>
<gene>
    <name type="primary">KEX1</name>
    <name type="ordered locus">PAS_chr2-1_0174</name>
</gene>
<comment type="function">
    <text evidence="1">Protease with a carboxypeptidase B-like function involved in the C-terminal processing of the lysine and arginine residues from protein precursors. Promotes cell fusion and is involved in the programmed cell death (By similarity).</text>
</comment>
<comment type="catalytic activity">
    <reaction>
        <text>Preferential release of a C-terminal arginine or lysine residue.</text>
        <dbReference type="EC" id="3.4.16.6"/>
    </reaction>
</comment>
<comment type="subcellular location">
    <subcellularLocation>
        <location evidence="1">Golgi apparatus</location>
        <location evidence="1">trans-Golgi network membrane</location>
        <topology evidence="1">Single-pass type I membrane protein</topology>
    </subcellularLocation>
</comment>
<comment type="similarity">
    <text evidence="5">Belongs to the peptidase S10 family.</text>
</comment>
<dbReference type="EC" id="3.4.16.6"/>
<dbReference type="EMBL" id="FN392320">
    <property type="protein sequence ID" value="CAY68781.1"/>
    <property type="molecule type" value="Genomic_DNA"/>
</dbReference>
<dbReference type="RefSeq" id="XP_002491061.1">
    <property type="nucleotide sequence ID" value="XM_002491016.1"/>
</dbReference>
<dbReference type="SMR" id="C4QZV7"/>
<dbReference type="FunCoup" id="C4QZV7">
    <property type="interactions" value="113"/>
</dbReference>
<dbReference type="STRING" id="644223.C4QZV7"/>
<dbReference type="ESTHER" id="picpa-KEX1">
    <property type="family name" value="Carboxypeptidase_S10"/>
</dbReference>
<dbReference type="MEROPS" id="S10.007"/>
<dbReference type="GlyCosmos" id="C4QZV7">
    <property type="glycosylation" value="6 sites, No reported glycans"/>
</dbReference>
<dbReference type="EnsemblFungi" id="CAY68781">
    <property type="protein sequence ID" value="CAY68781"/>
    <property type="gene ID" value="PAS_chr2-1_0174"/>
</dbReference>
<dbReference type="GeneID" id="8198557"/>
<dbReference type="KEGG" id="ppa:PAS_chr2-1_0174"/>
<dbReference type="eggNOG" id="KOG1282">
    <property type="taxonomic scope" value="Eukaryota"/>
</dbReference>
<dbReference type="HOGENOM" id="CLU_008523_11_2_1"/>
<dbReference type="InParanoid" id="C4QZV7"/>
<dbReference type="OMA" id="PLMFAGQ"/>
<dbReference type="OrthoDB" id="443318at2759"/>
<dbReference type="Proteomes" id="UP000000314">
    <property type="component" value="Chromosome 2"/>
</dbReference>
<dbReference type="GO" id="GO:0016020">
    <property type="term" value="C:membrane"/>
    <property type="evidence" value="ECO:0007669"/>
    <property type="project" value="UniProtKB-KW"/>
</dbReference>
<dbReference type="GO" id="GO:0005802">
    <property type="term" value="C:trans-Golgi network"/>
    <property type="evidence" value="ECO:0007669"/>
    <property type="project" value="TreeGrafter"/>
</dbReference>
<dbReference type="GO" id="GO:0004185">
    <property type="term" value="F:serine-type carboxypeptidase activity"/>
    <property type="evidence" value="ECO:0007669"/>
    <property type="project" value="UniProtKB-EC"/>
</dbReference>
<dbReference type="GO" id="GO:0006915">
    <property type="term" value="P:apoptotic process"/>
    <property type="evidence" value="ECO:0007669"/>
    <property type="project" value="UniProtKB-KW"/>
</dbReference>
<dbReference type="GO" id="GO:0006508">
    <property type="term" value="P:proteolysis"/>
    <property type="evidence" value="ECO:0007669"/>
    <property type="project" value="UniProtKB-KW"/>
</dbReference>
<dbReference type="Gene3D" id="3.40.50.1820">
    <property type="entry name" value="alpha/beta hydrolase"/>
    <property type="match status" value="1"/>
</dbReference>
<dbReference type="InterPro" id="IPR029058">
    <property type="entry name" value="AB_hydrolase_fold"/>
</dbReference>
<dbReference type="InterPro" id="IPR001563">
    <property type="entry name" value="Peptidase_S10"/>
</dbReference>
<dbReference type="InterPro" id="IPR018202">
    <property type="entry name" value="Ser_caboxypep_ser_AS"/>
</dbReference>
<dbReference type="PANTHER" id="PTHR11802:SF190">
    <property type="entry name" value="PHEROMONE-PROCESSING CARBOXYPEPTIDASE KEX1"/>
    <property type="match status" value="1"/>
</dbReference>
<dbReference type="PANTHER" id="PTHR11802">
    <property type="entry name" value="SERINE PROTEASE FAMILY S10 SERINE CARBOXYPEPTIDASE"/>
    <property type="match status" value="1"/>
</dbReference>
<dbReference type="Pfam" id="PF00450">
    <property type="entry name" value="Peptidase_S10"/>
    <property type="match status" value="1"/>
</dbReference>
<dbReference type="PRINTS" id="PR00724">
    <property type="entry name" value="CRBOXYPTASEC"/>
</dbReference>
<dbReference type="SUPFAM" id="SSF53474">
    <property type="entry name" value="alpha/beta-Hydrolases"/>
    <property type="match status" value="1"/>
</dbReference>
<dbReference type="PROSITE" id="PS00131">
    <property type="entry name" value="CARBOXYPEPT_SER_SER"/>
    <property type="match status" value="1"/>
</dbReference>
<name>KEX1_KOMPG</name>
<organism>
    <name type="scientific">Komagataella phaffii (strain GS115 / ATCC 20864)</name>
    <name type="common">Yeast</name>
    <name type="synonym">Pichia pastoris</name>
    <dbReference type="NCBI Taxonomy" id="644223"/>
    <lineage>
        <taxon>Eukaryota</taxon>
        <taxon>Fungi</taxon>
        <taxon>Dikarya</taxon>
        <taxon>Ascomycota</taxon>
        <taxon>Saccharomycotina</taxon>
        <taxon>Pichiomycetes</taxon>
        <taxon>Pichiales</taxon>
        <taxon>Pichiaceae</taxon>
        <taxon>Komagataella</taxon>
    </lineage>
</organism>